<proteinExistence type="inferred from homology"/>
<evidence type="ECO:0000255" key="1">
    <source>
        <dbReference type="HAMAP-Rule" id="MF_00567"/>
    </source>
</evidence>
<comment type="function">
    <text evidence="1">Catalyzes the condensation of iminoaspartate with dihydroxyacetone phosphate to form quinolinate.</text>
</comment>
<comment type="catalytic activity">
    <reaction evidence="1">
        <text>iminosuccinate + dihydroxyacetone phosphate = quinolinate + phosphate + 2 H2O + H(+)</text>
        <dbReference type="Rhea" id="RHEA:25888"/>
        <dbReference type="ChEBI" id="CHEBI:15377"/>
        <dbReference type="ChEBI" id="CHEBI:15378"/>
        <dbReference type="ChEBI" id="CHEBI:29959"/>
        <dbReference type="ChEBI" id="CHEBI:43474"/>
        <dbReference type="ChEBI" id="CHEBI:57642"/>
        <dbReference type="ChEBI" id="CHEBI:77875"/>
        <dbReference type="EC" id="2.5.1.72"/>
    </reaction>
    <physiologicalReaction direction="left-to-right" evidence="1">
        <dbReference type="Rhea" id="RHEA:25889"/>
    </physiologicalReaction>
</comment>
<comment type="cofactor">
    <cofactor evidence="1">
        <name>[4Fe-4S] cluster</name>
        <dbReference type="ChEBI" id="CHEBI:49883"/>
    </cofactor>
    <text evidence="1">Binds 1 [4Fe-4S] cluster per subunit.</text>
</comment>
<comment type="pathway">
    <text evidence="1">Cofactor biosynthesis; NAD(+) biosynthesis; quinolinate from iminoaspartate: step 1/1.</text>
</comment>
<comment type="subcellular location">
    <subcellularLocation>
        <location evidence="1">Cytoplasm</location>
    </subcellularLocation>
</comment>
<comment type="similarity">
    <text evidence="1">Belongs to the quinolinate synthase family. Type 1 subfamily.</text>
</comment>
<organism>
    <name type="scientific">Pseudomonas putida (strain ATCC 700007 / DSM 6899 / JCM 31910 / BCRC 17059 / LMG 24140 / F1)</name>
    <dbReference type="NCBI Taxonomy" id="351746"/>
    <lineage>
        <taxon>Bacteria</taxon>
        <taxon>Pseudomonadati</taxon>
        <taxon>Pseudomonadota</taxon>
        <taxon>Gammaproteobacteria</taxon>
        <taxon>Pseudomonadales</taxon>
        <taxon>Pseudomonadaceae</taxon>
        <taxon>Pseudomonas</taxon>
    </lineage>
</organism>
<protein>
    <recommendedName>
        <fullName evidence="1">Quinolinate synthase</fullName>
        <ecNumber evidence="1">2.5.1.72</ecNumber>
    </recommendedName>
</protein>
<gene>
    <name evidence="1" type="primary">nadA</name>
    <name type="ordered locus">Pput_1260</name>
</gene>
<dbReference type="EC" id="2.5.1.72" evidence="1"/>
<dbReference type="EMBL" id="CP000712">
    <property type="protein sequence ID" value="ABQ77421.1"/>
    <property type="molecule type" value="Genomic_DNA"/>
</dbReference>
<dbReference type="SMR" id="A5VZW1"/>
<dbReference type="KEGG" id="ppf:Pput_1260"/>
<dbReference type="eggNOG" id="COG0379">
    <property type="taxonomic scope" value="Bacteria"/>
</dbReference>
<dbReference type="HOGENOM" id="CLU_047382_1_0_6"/>
<dbReference type="UniPathway" id="UPA00253">
    <property type="reaction ID" value="UER00327"/>
</dbReference>
<dbReference type="GO" id="GO:0005829">
    <property type="term" value="C:cytosol"/>
    <property type="evidence" value="ECO:0007669"/>
    <property type="project" value="TreeGrafter"/>
</dbReference>
<dbReference type="GO" id="GO:0051539">
    <property type="term" value="F:4 iron, 4 sulfur cluster binding"/>
    <property type="evidence" value="ECO:0007669"/>
    <property type="project" value="UniProtKB-KW"/>
</dbReference>
<dbReference type="GO" id="GO:0046872">
    <property type="term" value="F:metal ion binding"/>
    <property type="evidence" value="ECO:0007669"/>
    <property type="project" value="UniProtKB-KW"/>
</dbReference>
<dbReference type="GO" id="GO:0008987">
    <property type="term" value="F:quinolinate synthetase A activity"/>
    <property type="evidence" value="ECO:0007669"/>
    <property type="project" value="UniProtKB-UniRule"/>
</dbReference>
<dbReference type="GO" id="GO:0034628">
    <property type="term" value="P:'de novo' NAD biosynthetic process from L-aspartate"/>
    <property type="evidence" value="ECO:0007669"/>
    <property type="project" value="TreeGrafter"/>
</dbReference>
<dbReference type="FunFam" id="3.40.50.10800:FF:000001">
    <property type="entry name" value="Quinolinate synthase A"/>
    <property type="match status" value="1"/>
</dbReference>
<dbReference type="FunFam" id="3.40.50.10800:FF:000003">
    <property type="entry name" value="Quinolinate synthase A"/>
    <property type="match status" value="1"/>
</dbReference>
<dbReference type="Gene3D" id="3.40.50.10800">
    <property type="entry name" value="NadA-like"/>
    <property type="match status" value="3"/>
</dbReference>
<dbReference type="HAMAP" id="MF_00567">
    <property type="entry name" value="NadA_type1"/>
    <property type="match status" value="1"/>
</dbReference>
<dbReference type="InterPro" id="IPR003473">
    <property type="entry name" value="NadA"/>
</dbReference>
<dbReference type="InterPro" id="IPR036094">
    <property type="entry name" value="NadA_sf"/>
</dbReference>
<dbReference type="InterPro" id="IPR023513">
    <property type="entry name" value="Quinolinate_synth_A_type1"/>
</dbReference>
<dbReference type="NCBIfam" id="TIGR00550">
    <property type="entry name" value="nadA"/>
    <property type="match status" value="1"/>
</dbReference>
<dbReference type="NCBIfam" id="NF006877">
    <property type="entry name" value="PRK09375.1-1"/>
    <property type="match status" value="1"/>
</dbReference>
<dbReference type="NCBIfam" id="NF006878">
    <property type="entry name" value="PRK09375.1-2"/>
    <property type="match status" value="1"/>
</dbReference>
<dbReference type="PANTHER" id="PTHR30573:SF0">
    <property type="entry name" value="QUINOLINATE SYNTHASE, CHLOROPLASTIC"/>
    <property type="match status" value="1"/>
</dbReference>
<dbReference type="PANTHER" id="PTHR30573">
    <property type="entry name" value="QUINOLINATE SYNTHETASE A"/>
    <property type="match status" value="1"/>
</dbReference>
<dbReference type="Pfam" id="PF02445">
    <property type="entry name" value="NadA"/>
    <property type="match status" value="1"/>
</dbReference>
<dbReference type="SUPFAM" id="SSF142754">
    <property type="entry name" value="NadA-like"/>
    <property type="match status" value="1"/>
</dbReference>
<reference key="1">
    <citation type="submission" date="2007-05" db="EMBL/GenBank/DDBJ databases">
        <title>Complete sequence of Pseudomonas putida F1.</title>
        <authorList>
            <consortium name="US DOE Joint Genome Institute"/>
            <person name="Copeland A."/>
            <person name="Lucas S."/>
            <person name="Lapidus A."/>
            <person name="Barry K."/>
            <person name="Detter J.C."/>
            <person name="Glavina del Rio T."/>
            <person name="Hammon N."/>
            <person name="Israni S."/>
            <person name="Dalin E."/>
            <person name="Tice H."/>
            <person name="Pitluck S."/>
            <person name="Chain P."/>
            <person name="Malfatti S."/>
            <person name="Shin M."/>
            <person name="Vergez L."/>
            <person name="Schmutz J."/>
            <person name="Larimer F."/>
            <person name="Land M."/>
            <person name="Hauser L."/>
            <person name="Kyrpides N."/>
            <person name="Lykidis A."/>
            <person name="Parales R."/>
            <person name="Richardson P."/>
        </authorList>
    </citation>
    <scope>NUCLEOTIDE SEQUENCE [LARGE SCALE GENOMIC DNA]</scope>
    <source>
        <strain>ATCC 700007 / DSM 6899 / JCM 31910 / BCRC 17059 / LMG 24140 / F1</strain>
    </source>
</reference>
<keyword id="KW-0004">4Fe-4S</keyword>
<keyword id="KW-0963">Cytoplasm</keyword>
<keyword id="KW-0408">Iron</keyword>
<keyword id="KW-0411">Iron-sulfur</keyword>
<keyword id="KW-0479">Metal-binding</keyword>
<keyword id="KW-0662">Pyridine nucleotide biosynthesis</keyword>
<keyword id="KW-0808">Transferase</keyword>
<sequence length="352" mass="38417">MTQISERLLVQAHLDAKQPNPLTAEQEAEYRAAIAAELKAQNAVLVAHYYCDPVIQALAEETGGCVSDSLEMARFGKNHPAETVIVAGVRFMGETAKILTPEKRVLMPTLEATCSLDLGCPVEEFSAFCDQHPERTVVVYANTSAAVKARADWVVTSSCALEIVESLMDNGETIIWGPDQHLGRYIQKQTGADMLLWDGACIVHEEFKSRQLADMKALYPDAAILVHPESPEAVIELADAVGSTSQLIKAAQTLPNKTFIVATDRGIFYKMQQLCPDKEFVEAPTAGNGAACRSCAHCPWMAMNTLERVLDCLRNGTNEIFVDPALVPKAIKPLNRMLDFTQAARLKLSGNA</sequence>
<feature type="chain" id="PRO_1000024965" description="Quinolinate synthase">
    <location>
        <begin position="1"/>
        <end position="352"/>
    </location>
</feature>
<feature type="binding site" evidence="1">
    <location>
        <position position="48"/>
    </location>
    <ligand>
        <name>iminosuccinate</name>
        <dbReference type="ChEBI" id="CHEBI:77875"/>
    </ligand>
</feature>
<feature type="binding site" evidence="1">
    <location>
        <position position="69"/>
    </location>
    <ligand>
        <name>iminosuccinate</name>
        <dbReference type="ChEBI" id="CHEBI:77875"/>
    </ligand>
</feature>
<feature type="binding site" evidence="1">
    <location>
        <position position="114"/>
    </location>
    <ligand>
        <name>[4Fe-4S] cluster</name>
        <dbReference type="ChEBI" id="CHEBI:49883"/>
    </ligand>
</feature>
<feature type="binding site" evidence="1">
    <location>
        <begin position="140"/>
        <end position="142"/>
    </location>
    <ligand>
        <name>iminosuccinate</name>
        <dbReference type="ChEBI" id="CHEBI:77875"/>
    </ligand>
</feature>
<feature type="binding site" evidence="1">
    <location>
        <position position="157"/>
    </location>
    <ligand>
        <name>iminosuccinate</name>
        <dbReference type="ChEBI" id="CHEBI:77875"/>
    </ligand>
</feature>
<feature type="binding site" evidence="1">
    <location>
        <position position="201"/>
    </location>
    <ligand>
        <name>[4Fe-4S] cluster</name>
        <dbReference type="ChEBI" id="CHEBI:49883"/>
    </ligand>
</feature>
<feature type="binding site" evidence="1">
    <location>
        <begin position="227"/>
        <end position="229"/>
    </location>
    <ligand>
        <name>iminosuccinate</name>
        <dbReference type="ChEBI" id="CHEBI:77875"/>
    </ligand>
</feature>
<feature type="binding site" evidence="1">
    <location>
        <position position="244"/>
    </location>
    <ligand>
        <name>iminosuccinate</name>
        <dbReference type="ChEBI" id="CHEBI:77875"/>
    </ligand>
</feature>
<feature type="binding site" evidence="1">
    <location>
        <position position="298"/>
    </location>
    <ligand>
        <name>[4Fe-4S] cluster</name>
        <dbReference type="ChEBI" id="CHEBI:49883"/>
    </ligand>
</feature>
<accession>A5VZW1</accession>
<name>NADA_PSEP1</name>